<keyword id="KW-0275">Fatty acid biosynthesis</keyword>
<keyword id="KW-0276">Fatty acid metabolism</keyword>
<keyword id="KW-0408">Iron</keyword>
<keyword id="KW-0444">Lipid biosynthesis</keyword>
<keyword id="KW-0443">Lipid metabolism</keyword>
<keyword id="KW-0456">Lyase</keyword>
<keyword id="KW-0479">Metal-binding</keyword>
<keyword id="KW-0560">Oxidoreductase</keyword>
<keyword id="KW-0925">Oxylipin biosynthesis</keyword>
<keyword id="KW-1185">Reference proteome</keyword>
<comment type="function">
    <text evidence="2">Cytochrome P450 epoxyalcohol synthase involved in the metabolism of oxylipins 'ectocarpins' natural products, such as hybridalactone, ecklonilactones and derivatives (PubMed:27863255). Isomerizes the hydroperoxides into epoxyalcohols via epoxyallylic radical (PubMed:27863255). Can use linoleic acid 9-hydroperoxide ((9S,10E,12Z)-9-hydroperoxy-10,12-octadecadienoic, 9-HPOD) as preferred substrate to produce (9S,10S,11S,12Z)-9,10-epoxy-11-hydroxy-12-octadecenoic acid and, to a lower extent, active with linoleate 13-hydroperoxide ((9Z,11E,13S)-13-hydroperoxy-9,11-octadecadienoic, 13-HPOD) to produce 11-hydroxy-12,13-epoxy-9-octadecenoic acid (PubMed:27863255). No activity toward alpha-linolenic acid 9- and 13-hydroperoxides, and toward eicosapentaenoic acid 15-hydroperoxide (PubMed:27863255).</text>
</comment>
<comment type="catalytic activity">
    <reaction evidence="2">
        <text>(9S)-hydroperoxy-(10E,12Z)-octadecadienoate = (11S)-hydroxy-(9S,10S)-epoxy-(12Z)-octadecenoate</text>
        <dbReference type="Rhea" id="RHEA:75591"/>
        <dbReference type="ChEBI" id="CHEBI:60955"/>
        <dbReference type="ChEBI" id="CHEBI:194351"/>
    </reaction>
    <physiologicalReaction direction="left-to-right" evidence="2">
        <dbReference type="Rhea" id="RHEA:75592"/>
    </physiologicalReaction>
</comment>
<comment type="catalytic activity">
    <reaction evidence="2">
        <text>(13S)-hydroperoxy-(9Z,11E)-octadecadienoate = 11-hydroxy-12,13-epoxy-(9Z)-octadecenoate</text>
        <dbReference type="Rhea" id="RHEA:75595"/>
        <dbReference type="ChEBI" id="CHEBI:57466"/>
        <dbReference type="ChEBI" id="CHEBI:194353"/>
    </reaction>
    <physiologicalReaction direction="left-to-right" evidence="2">
        <dbReference type="Rhea" id="RHEA:75596"/>
    </physiologicalReaction>
</comment>
<comment type="cofactor">
    <cofactor evidence="1">
        <name>heme</name>
        <dbReference type="ChEBI" id="CHEBI:30413"/>
    </cofactor>
</comment>
<comment type="biophysicochemical properties">
    <kinetics>
        <text evidence="2">kcat is 149 sec(-1) with 9-HPOD as substrate (PubMed:27863255). kcat is 18.1 sec(-1) with 13-HPOD as substrate (PubMed:27863255).</text>
    </kinetics>
</comment>
<comment type="pathway">
    <text evidence="2">Lipid metabolism; oxylipin biosynthesis.</text>
</comment>
<comment type="similarity">
    <text evidence="4">Belongs to the cytochrome P450 family.</text>
</comment>
<comment type="sequence caution" evidence="4">
    <conflict type="erroneous gene model prediction">
        <sequence resource="EMBL-CDS" id="CBN75516"/>
    </conflict>
</comment>
<comment type="sequence caution" evidence="4">
    <conflict type="erroneous gene model prediction">
        <sequence resource="EMBL-CDS" id="CBN75517"/>
    </conflict>
</comment>
<sequence>MTDNAEILEPQGDHHAWFSLQPFLEAGKWSSTPGTYFKEMKEKNGGAPIYKAHPGLKVITITDHASGKWFFNQPDTVLDRQKGQRFGPLKCKEEYLGKGLPALVTNAMEKHEGARDYIVAVLRERLAATDTTLEHATANFYKDLWANGMGDYTTVYDLFLQQSYAFVLEWIFGMGEEGGQPLPPYKDFLTVNPADLSVLIGLEVDTPVANLVSMVAQAVAGGVSSEEKASIEVLLEAIRSSKMWPSFTKMLEESGLPTQDMDKMFMFFSGFQSSSALAKNMEYCVGSLAANPDFLAELRAELDGQELTIKSVSDAKRFPLLDSFHWEILRLYPAPQFFFKTAQMDLVVPTSSGARYQVRKGDMLCCHHPLIHIDEAVFGADATEFKPKRFIGNPGLKDDVFAYAFPKPSEPGRVGGMPWGCAAHTVGVLDGILKVFYGRWVQEAEWEMKEPPIIDPVEYLGVVGPDGLGFAKVTPRK</sequence>
<gene>
    <name evidence="3" type="primary">EAS</name>
    <name evidence="3" type="synonym">CYP5164B1</name>
    <name evidence="5" type="ORF">Esi_0111_0095</name>
</gene>
<accession>A0A1L3HS58</accession>
<accession>D8LCX4</accession>
<accession>D8LCX5</accession>
<feature type="chain" id="PRO_0000458100" description="Epoxyalcohol synthase CYP5164B1">
    <location>
        <begin position="1"/>
        <end position="477"/>
    </location>
</feature>
<feature type="binding site" description="axial binding residue" evidence="1">
    <location>
        <position position="421"/>
    </location>
    <ligand>
        <name>heme</name>
        <dbReference type="ChEBI" id="CHEBI:30413"/>
    </ligand>
    <ligandPart>
        <name>Fe</name>
        <dbReference type="ChEBI" id="CHEBI:18248"/>
    </ligandPart>
</feature>
<name>EAS_ECTSI</name>
<proteinExistence type="evidence at protein level"/>
<organism>
    <name type="scientific">Ectocarpus siliculosus</name>
    <name type="common">Brown alga</name>
    <name type="synonym">Conferva siliculosa</name>
    <dbReference type="NCBI Taxonomy" id="2880"/>
    <lineage>
        <taxon>Eukaryota</taxon>
        <taxon>Sar</taxon>
        <taxon>Stramenopiles</taxon>
        <taxon>Ochrophyta</taxon>
        <taxon>PX clade</taxon>
        <taxon>Phaeophyceae</taxon>
        <taxon>Ectocarpales</taxon>
        <taxon>Ectocarpaceae</taxon>
        <taxon>Ectocarpus</taxon>
    </lineage>
</organism>
<reference key="1">
    <citation type="journal article" date="2016" name="Biochim. Biophys. Acta">
        <title>Epoxyalcohol synthase of Ectocarpus siliculosus. First CYP74-related enzyme of oxylipin biosynthesis in brown algae.</title>
        <authorList>
            <person name="Toporkova Y.Y."/>
            <person name="Fatykhova V.S."/>
            <person name="Gogolev Y.V."/>
            <person name="Khairutdinov B.I."/>
            <person name="Mukhtarova L.S."/>
            <person name="Grechkin A.N."/>
        </authorList>
    </citation>
    <scope>NUCLEOTIDE SEQUENCE [MRNA]</scope>
    <scope>FUNCTION</scope>
    <scope>CATALYTIC ACTIVITY</scope>
    <scope>PATHWAY</scope>
    <scope>BIOPHYSICOCHEMICAL PROPERTIES</scope>
</reference>
<reference key="2">
    <citation type="journal article" date="2010" name="Nature">
        <title>The Ectocarpus genome and the independent evolution of multicellularity in brown algae.</title>
        <authorList>
            <person name="Cock J.M."/>
            <person name="Sterck L."/>
            <person name="Rouze P."/>
            <person name="Scornet D."/>
            <person name="Allen A.E."/>
            <person name="Amoutzias G."/>
            <person name="Anthouard V."/>
            <person name="Artiguenave F."/>
            <person name="Aury J.M."/>
            <person name="Badger J.H."/>
            <person name="Beszteri B."/>
            <person name="Billiau K."/>
            <person name="Bonnet E."/>
            <person name="Bothwell J.H."/>
            <person name="Bowler C."/>
            <person name="Boyen C."/>
            <person name="Brownlee C."/>
            <person name="Carrano C.J."/>
            <person name="Charrier B."/>
            <person name="Cho G.Y."/>
            <person name="Coelho S.M."/>
            <person name="Collen J."/>
            <person name="Corre E."/>
            <person name="Da Silva C."/>
            <person name="Delage L."/>
            <person name="Delaroque N."/>
            <person name="Dittami S.M."/>
            <person name="Doulbeau S."/>
            <person name="Elias M."/>
            <person name="Farnham G."/>
            <person name="Gachon C.M."/>
            <person name="Gschloessl B."/>
            <person name="Heesch S."/>
            <person name="Jabbari K."/>
            <person name="Jubin C."/>
            <person name="Kawai H."/>
            <person name="Kimura K."/>
            <person name="Kloareg B."/>
            <person name="Kupper F.C."/>
            <person name="Lang D."/>
            <person name="Le Bail A."/>
            <person name="Leblanc C."/>
            <person name="Lerouge P."/>
            <person name="Lohr M."/>
            <person name="Lopez P.J."/>
            <person name="Martens C."/>
            <person name="Maumus F."/>
            <person name="Michel G."/>
            <person name="Miranda-Saavedra D."/>
            <person name="Morales J."/>
            <person name="Moreau H."/>
            <person name="Motomura T."/>
            <person name="Nagasato C."/>
            <person name="Napoli C.A."/>
            <person name="Nelson D.R."/>
            <person name="Nyvall-Collen P."/>
            <person name="Peters A.F."/>
            <person name="Pommier C."/>
            <person name="Potin P."/>
            <person name="Poulain J."/>
            <person name="Quesneville H."/>
            <person name="Read B."/>
            <person name="Rensing S.A."/>
            <person name="Ritter A."/>
            <person name="Rousvoal S."/>
            <person name="Samanta M."/>
            <person name="Samson G."/>
            <person name="Schroeder D.C."/>
            <person name="Segurens B."/>
            <person name="Strittmatter M."/>
            <person name="Tonon T."/>
            <person name="Tregear J.W."/>
            <person name="Valentin K."/>
            <person name="von Dassow P."/>
            <person name="Yamagishi T."/>
            <person name="Van de Peer Y."/>
            <person name="Wincker P."/>
        </authorList>
    </citation>
    <scope>NUCLEOTIDE SEQUENCE [LARGE SCALE GENOMIC DNA]</scope>
    <source>
        <strain>Ec32 / CCAP1310/4</strain>
    </source>
</reference>
<protein>
    <recommendedName>
        <fullName evidence="3">Epoxyalcohol synthase CYP5164B1</fullName>
        <shortName evidence="3">EsEAS</shortName>
        <ecNumber evidence="2">4.2.1.-</ecNumber>
    </recommendedName>
    <alternativeName>
        <fullName evidence="4">Cytochrome P450 5164B1</fullName>
    </alternativeName>
</protein>
<dbReference type="EC" id="4.2.1.-" evidence="2"/>
<dbReference type="EMBL" id="KY211076">
    <property type="protein sequence ID" value="APG42673.1"/>
    <property type="molecule type" value="mRNA"/>
</dbReference>
<dbReference type="EMBL" id="FN647801">
    <property type="protein sequence ID" value="CBN75516.1"/>
    <property type="status" value="ALT_SEQ"/>
    <property type="molecule type" value="Genomic_DNA"/>
</dbReference>
<dbReference type="EMBL" id="FN647801">
    <property type="protein sequence ID" value="CBN75517.1"/>
    <property type="status" value="ALT_SEQ"/>
    <property type="molecule type" value="Genomic_DNA"/>
</dbReference>
<dbReference type="SMR" id="A0A1L3HS58"/>
<dbReference type="STRING" id="2880.D8LCX5"/>
<dbReference type="EnsemblProtists" id="CBN75516">
    <property type="protein sequence ID" value="CBN75516"/>
    <property type="gene ID" value="Esi_0111_0092"/>
</dbReference>
<dbReference type="EnsemblProtists" id="CBN75517">
    <property type="protein sequence ID" value="CBN75517"/>
    <property type="gene ID" value="Esi_0111_0095"/>
</dbReference>
<dbReference type="InParanoid" id="A0A1L3HS58"/>
<dbReference type="OrthoDB" id="1470350at2759"/>
<dbReference type="UniPathway" id="UPA00382"/>
<dbReference type="Proteomes" id="UP000002630">
    <property type="component" value="Linkage Group LG34"/>
</dbReference>
<dbReference type="GO" id="GO:0020037">
    <property type="term" value="F:heme binding"/>
    <property type="evidence" value="ECO:0007669"/>
    <property type="project" value="InterPro"/>
</dbReference>
<dbReference type="GO" id="GO:0005506">
    <property type="term" value="F:iron ion binding"/>
    <property type="evidence" value="ECO:0007669"/>
    <property type="project" value="InterPro"/>
</dbReference>
<dbReference type="GO" id="GO:0016829">
    <property type="term" value="F:lyase activity"/>
    <property type="evidence" value="ECO:0007669"/>
    <property type="project" value="UniProtKB-KW"/>
</dbReference>
<dbReference type="GO" id="GO:0004497">
    <property type="term" value="F:monooxygenase activity"/>
    <property type="evidence" value="ECO:0007669"/>
    <property type="project" value="InterPro"/>
</dbReference>
<dbReference type="GO" id="GO:0016705">
    <property type="term" value="F:oxidoreductase activity, acting on paired donors, with incorporation or reduction of molecular oxygen"/>
    <property type="evidence" value="ECO:0007669"/>
    <property type="project" value="InterPro"/>
</dbReference>
<dbReference type="GO" id="GO:0006633">
    <property type="term" value="P:fatty acid biosynthetic process"/>
    <property type="evidence" value="ECO:0007669"/>
    <property type="project" value="UniProtKB-KW"/>
</dbReference>
<dbReference type="GO" id="GO:0031408">
    <property type="term" value="P:oxylipin biosynthetic process"/>
    <property type="evidence" value="ECO:0007669"/>
    <property type="project" value="UniProtKB-UniPathway"/>
</dbReference>
<dbReference type="GO" id="GO:0016125">
    <property type="term" value="P:sterol metabolic process"/>
    <property type="evidence" value="ECO:0007669"/>
    <property type="project" value="TreeGrafter"/>
</dbReference>
<dbReference type="Gene3D" id="1.10.630.10">
    <property type="entry name" value="Cytochrome P450"/>
    <property type="match status" value="1"/>
</dbReference>
<dbReference type="InterPro" id="IPR001128">
    <property type="entry name" value="Cyt_P450"/>
</dbReference>
<dbReference type="InterPro" id="IPR036396">
    <property type="entry name" value="Cyt_P450_sf"/>
</dbReference>
<dbReference type="PANTHER" id="PTHR24286:SF255">
    <property type="entry name" value="ALLENE OXIDE SYNTHASE, CHLOROPLASTIC"/>
    <property type="match status" value="1"/>
</dbReference>
<dbReference type="PANTHER" id="PTHR24286">
    <property type="entry name" value="CYTOCHROME P450 26"/>
    <property type="match status" value="1"/>
</dbReference>
<dbReference type="Pfam" id="PF00067">
    <property type="entry name" value="p450"/>
    <property type="match status" value="1"/>
</dbReference>
<dbReference type="SUPFAM" id="SSF48264">
    <property type="entry name" value="Cytochrome P450"/>
    <property type="match status" value="1"/>
</dbReference>
<evidence type="ECO:0000250" key="1">
    <source>
        <dbReference type="UniProtKB" id="Q96242"/>
    </source>
</evidence>
<evidence type="ECO:0000269" key="2">
    <source>
    </source>
</evidence>
<evidence type="ECO:0000303" key="3">
    <source>
    </source>
</evidence>
<evidence type="ECO:0000305" key="4"/>
<evidence type="ECO:0000312" key="5">
    <source>
        <dbReference type="EMBL" id="CBN75517.1"/>
    </source>
</evidence>